<organism>
    <name type="scientific">Cereibacter sphaeroides (strain ATCC 17023 / DSM 158 / JCM 6121 / CCUG 31486 / LMG 2827 / NBRC 12203 / NCIMB 8253 / ATH 2.4.1.)</name>
    <name type="common">Rhodobacter sphaeroides</name>
    <dbReference type="NCBI Taxonomy" id="272943"/>
    <lineage>
        <taxon>Bacteria</taxon>
        <taxon>Pseudomonadati</taxon>
        <taxon>Pseudomonadota</taxon>
        <taxon>Alphaproteobacteria</taxon>
        <taxon>Rhodobacterales</taxon>
        <taxon>Paracoccaceae</taxon>
        <taxon>Cereibacter</taxon>
    </lineage>
</organism>
<protein>
    <recommendedName>
        <fullName evidence="1">GTPase Obg</fullName>
        <ecNumber evidence="1">3.6.5.-</ecNumber>
    </recommendedName>
    <alternativeName>
        <fullName evidence="1">GTP-binding protein Obg</fullName>
    </alternativeName>
</protein>
<keyword id="KW-0963">Cytoplasm</keyword>
<keyword id="KW-0342">GTP-binding</keyword>
<keyword id="KW-0378">Hydrolase</keyword>
<keyword id="KW-0460">Magnesium</keyword>
<keyword id="KW-0479">Metal-binding</keyword>
<keyword id="KW-0547">Nucleotide-binding</keyword>
<keyword id="KW-1185">Reference proteome</keyword>
<feature type="chain" id="PRO_0000386182" description="GTPase Obg">
    <location>
        <begin position="1"/>
        <end position="342"/>
    </location>
</feature>
<feature type="domain" description="Obg" evidence="2">
    <location>
        <begin position="1"/>
        <end position="159"/>
    </location>
</feature>
<feature type="domain" description="OBG-type G" evidence="1">
    <location>
        <begin position="160"/>
        <end position="327"/>
    </location>
</feature>
<feature type="binding site" evidence="1">
    <location>
        <begin position="166"/>
        <end position="173"/>
    </location>
    <ligand>
        <name>GTP</name>
        <dbReference type="ChEBI" id="CHEBI:37565"/>
    </ligand>
</feature>
<feature type="binding site" evidence="1">
    <location>
        <position position="173"/>
    </location>
    <ligand>
        <name>Mg(2+)</name>
        <dbReference type="ChEBI" id="CHEBI:18420"/>
    </ligand>
</feature>
<feature type="binding site" evidence="1">
    <location>
        <begin position="191"/>
        <end position="195"/>
    </location>
    <ligand>
        <name>GTP</name>
        <dbReference type="ChEBI" id="CHEBI:37565"/>
    </ligand>
</feature>
<feature type="binding site" evidence="1">
    <location>
        <position position="193"/>
    </location>
    <ligand>
        <name>Mg(2+)</name>
        <dbReference type="ChEBI" id="CHEBI:18420"/>
    </ligand>
</feature>
<feature type="binding site" evidence="1">
    <location>
        <begin position="212"/>
        <end position="215"/>
    </location>
    <ligand>
        <name>GTP</name>
        <dbReference type="ChEBI" id="CHEBI:37565"/>
    </ligand>
</feature>
<feature type="binding site" evidence="1">
    <location>
        <begin position="279"/>
        <end position="282"/>
    </location>
    <ligand>
        <name>GTP</name>
        <dbReference type="ChEBI" id="CHEBI:37565"/>
    </ligand>
</feature>
<feature type="binding site" evidence="1">
    <location>
        <begin position="308"/>
        <end position="310"/>
    </location>
    <ligand>
        <name>GTP</name>
        <dbReference type="ChEBI" id="CHEBI:37565"/>
    </ligand>
</feature>
<comment type="function">
    <text evidence="1">An essential GTPase which binds GTP, GDP and possibly (p)ppGpp with moderate affinity, with high nucleotide exchange rates and a fairly low GTP hydrolysis rate. Plays a role in control of the cell cycle, stress response, ribosome biogenesis and in those bacteria that undergo differentiation, in morphogenesis control.</text>
</comment>
<comment type="cofactor">
    <cofactor evidence="1">
        <name>Mg(2+)</name>
        <dbReference type="ChEBI" id="CHEBI:18420"/>
    </cofactor>
</comment>
<comment type="subunit">
    <text evidence="1">Monomer.</text>
</comment>
<comment type="subcellular location">
    <subcellularLocation>
        <location evidence="1">Cytoplasm</location>
    </subcellularLocation>
</comment>
<comment type="similarity">
    <text evidence="1">Belongs to the TRAFAC class OBG-HflX-like GTPase superfamily. OBG GTPase family.</text>
</comment>
<dbReference type="EC" id="3.6.5.-" evidence="1"/>
<dbReference type="EMBL" id="CP000144">
    <property type="protein sequence ID" value="ABA80605.1"/>
    <property type="molecule type" value="Genomic_DNA"/>
</dbReference>
<dbReference type="RefSeq" id="YP_354506.1">
    <property type="nucleotide sequence ID" value="NC_007494.2"/>
</dbReference>
<dbReference type="SMR" id="Q3IXX9"/>
<dbReference type="STRING" id="272943.RSP_3822"/>
<dbReference type="EnsemblBacteria" id="ABA80605">
    <property type="protein sequence ID" value="ABA80605"/>
    <property type="gene ID" value="RSP_3822"/>
</dbReference>
<dbReference type="GeneID" id="3721403"/>
<dbReference type="KEGG" id="rsp:RSP_3822"/>
<dbReference type="PATRIC" id="fig|272943.9.peg.3408"/>
<dbReference type="eggNOG" id="COG0536">
    <property type="taxonomic scope" value="Bacteria"/>
</dbReference>
<dbReference type="OrthoDB" id="9807318at2"/>
<dbReference type="PhylomeDB" id="Q3IXX9"/>
<dbReference type="Proteomes" id="UP000002703">
    <property type="component" value="Chromosome 2"/>
</dbReference>
<dbReference type="GO" id="GO:0005737">
    <property type="term" value="C:cytoplasm"/>
    <property type="evidence" value="ECO:0007669"/>
    <property type="project" value="UniProtKB-SubCell"/>
</dbReference>
<dbReference type="GO" id="GO:0005525">
    <property type="term" value="F:GTP binding"/>
    <property type="evidence" value="ECO:0007669"/>
    <property type="project" value="UniProtKB-UniRule"/>
</dbReference>
<dbReference type="GO" id="GO:0003924">
    <property type="term" value="F:GTPase activity"/>
    <property type="evidence" value="ECO:0007669"/>
    <property type="project" value="UniProtKB-UniRule"/>
</dbReference>
<dbReference type="GO" id="GO:0000287">
    <property type="term" value="F:magnesium ion binding"/>
    <property type="evidence" value="ECO:0007669"/>
    <property type="project" value="InterPro"/>
</dbReference>
<dbReference type="GO" id="GO:0042254">
    <property type="term" value="P:ribosome biogenesis"/>
    <property type="evidence" value="ECO:0007669"/>
    <property type="project" value="UniProtKB-UniRule"/>
</dbReference>
<dbReference type="CDD" id="cd01898">
    <property type="entry name" value="Obg"/>
    <property type="match status" value="1"/>
</dbReference>
<dbReference type="FunFam" id="2.70.210.12:FF:000001">
    <property type="entry name" value="GTPase Obg"/>
    <property type="match status" value="1"/>
</dbReference>
<dbReference type="Gene3D" id="2.70.210.12">
    <property type="entry name" value="GTP1/OBG domain"/>
    <property type="match status" value="1"/>
</dbReference>
<dbReference type="Gene3D" id="3.40.50.300">
    <property type="entry name" value="P-loop containing nucleotide triphosphate hydrolases"/>
    <property type="match status" value="1"/>
</dbReference>
<dbReference type="HAMAP" id="MF_01454">
    <property type="entry name" value="GTPase_Obg"/>
    <property type="match status" value="1"/>
</dbReference>
<dbReference type="InterPro" id="IPR031167">
    <property type="entry name" value="G_OBG"/>
</dbReference>
<dbReference type="InterPro" id="IPR006073">
    <property type="entry name" value="GTP-bd"/>
</dbReference>
<dbReference type="InterPro" id="IPR014100">
    <property type="entry name" value="GTP-bd_Obg/CgtA"/>
</dbReference>
<dbReference type="InterPro" id="IPR006074">
    <property type="entry name" value="GTP1-OBG_CS"/>
</dbReference>
<dbReference type="InterPro" id="IPR006169">
    <property type="entry name" value="GTP1_OBG_dom"/>
</dbReference>
<dbReference type="InterPro" id="IPR036726">
    <property type="entry name" value="GTP1_OBG_dom_sf"/>
</dbReference>
<dbReference type="InterPro" id="IPR045086">
    <property type="entry name" value="OBG_GTPase"/>
</dbReference>
<dbReference type="InterPro" id="IPR027417">
    <property type="entry name" value="P-loop_NTPase"/>
</dbReference>
<dbReference type="NCBIfam" id="TIGR02729">
    <property type="entry name" value="Obg_CgtA"/>
    <property type="match status" value="1"/>
</dbReference>
<dbReference type="NCBIfam" id="NF008955">
    <property type="entry name" value="PRK12297.1"/>
    <property type="match status" value="1"/>
</dbReference>
<dbReference type="NCBIfam" id="NF008956">
    <property type="entry name" value="PRK12299.1"/>
    <property type="match status" value="1"/>
</dbReference>
<dbReference type="PANTHER" id="PTHR11702">
    <property type="entry name" value="DEVELOPMENTALLY REGULATED GTP-BINDING PROTEIN-RELATED"/>
    <property type="match status" value="1"/>
</dbReference>
<dbReference type="PANTHER" id="PTHR11702:SF31">
    <property type="entry name" value="MITOCHONDRIAL RIBOSOME-ASSOCIATED GTPASE 2"/>
    <property type="match status" value="1"/>
</dbReference>
<dbReference type="Pfam" id="PF01018">
    <property type="entry name" value="GTP1_OBG"/>
    <property type="match status" value="1"/>
</dbReference>
<dbReference type="Pfam" id="PF01926">
    <property type="entry name" value="MMR_HSR1"/>
    <property type="match status" value="1"/>
</dbReference>
<dbReference type="PIRSF" id="PIRSF002401">
    <property type="entry name" value="GTP_bd_Obg/CgtA"/>
    <property type="match status" value="1"/>
</dbReference>
<dbReference type="PRINTS" id="PR00326">
    <property type="entry name" value="GTP1OBG"/>
</dbReference>
<dbReference type="SUPFAM" id="SSF82051">
    <property type="entry name" value="Obg GTP-binding protein N-terminal domain"/>
    <property type="match status" value="1"/>
</dbReference>
<dbReference type="SUPFAM" id="SSF52540">
    <property type="entry name" value="P-loop containing nucleoside triphosphate hydrolases"/>
    <property type="match status" value="1"/>
</dbReference>
<dbReference type="PROSITE" id="PS51710">
    <property type="entry name" value="G_OBG"/>
    <property type="match status" value="1"/>
</dbReference>
<dbReference type="PROSITE" id="PS00905">
    <property type="entry name" value="GTP1_OBG"/>
    <property type="match status" value="1"/>
</dbReference>
<dbReference type="PROSITE" id="PS51883">
    <property type="entry name" value="OBG"/>
    <property type="match status" value="1"/>
</dbReference>
<accession>Q3IXX9</accession>
<reference key="1">
    <citation type="submission" date="2005-09" db="EMBL/GenBank/DDBJ databases">
        <title>Complete sequence of chromosome 2 of Rhodobacter sphaeroides 2.4.1.</title>
        <authorList>
            <person name="Copeland A."/>
            <person name="Lucas S."/>
            <person name="Lapidus A."/>
            <person name="Barry K."/>
            <person name="Detter J.C."/>
            <person name="Glavina T."/>
            <person name="Hammon N."/>
            <person name="Israni S."/>
            <person name="Pitluck S."/>
            <person name="Richardson P."/>
            <person name="Mackenzie C."/>
            <person name="Choudhary M."/>
            <person name="Larimer F."/>
            <person name="Hauser L.J."/>
            <person name="Land M."/>
            <person name="Donohue T.J."/>
            <person name="Kaplan S."/>
        </authorList>
    </citation>
    <scope>NUCLEOTIDE SEQUENCE [LARGE SCALE GENOMIC DNA]</scope>
    <source>
        <strain>ATCC 17023 / DSM 158 / JCM 6121 / CCUG 31486 / LMG 2827 / NBRC 12203 / NCIMB 8253 / ATH 2.4.1.</strain>
    </source>
</reference>
<gene>
    <name evidence="1" type="primary">obg</name>
    <name type="ordered locus">RHOS4_30370</name>
    <name type="ORF">RSP_3822</name>
</gene>
<sequence length="342" mass="36383">MKFLDLCKVYIRSGGGGGGCVSFRREKFIEFGGPDGGDGGNGGSVWAEAVDGLNTLIDFRYQQHFFAKSGQPGMGSQRTGRSGDDIVLKVPVGTEIIDEDEETVIADLTEVGQRVLLAQGGNGGWGNLRFKSSTNRAPARANPGQPGIDRTIWLRLKLIADAGLLGLPNAGKSTFLSATSNARPKIADYPFTTLVPNLGVVGVDGKEFVIADIPGLIEGASEGRGLGDQFLAHVERCSVLLHLVDGTSSTIVKDYRTIIGELEAYGGDLALKPRITAMNKIDAMDSRQISDRRRALEKATGGKVFTISGVAGTGLMDVLRALWAEIDGARGDKVEEHAPWQP</sequence>
<name>OBG_CERS4</name>
<proteinExistence type="inferred from homology"/>
<evidence type="ECO:0000255" key="1">
    <source>
        <dbReference type="HAMAP-Rule" id="MF_01454"/>
    </source>
</evidence>
<evidence type="ECO:0000255" key="2">
    <source>
        <dbReference type="PROSITE-ProRule" id="PRU01231"/>
    </source>
</evidence>